<dbReference type="EC" id="6.3.4.3" evidence="1"/>
<dbReference type="EMBL" id="BX248357">
    <property type="protein sequence ID" value="CAE49782.1"/>
    <property type="molecule type" value="Genomic_DNA"/>
</dbReference>
<dbReference type="RefSeq" id="WP_010934929.1">
    <property type="nucleotide sequence ID" value="NC_002935.2"/>
</dbReference>
<dbReference type="SMR" id="Q6NH87"/>
<dbReference type="STRING" id="257309.DIP1253"/>
<dbReference type="KEGG" id="cdi:DIP1253"/>
<dbReference type="HOGENOM" id="CLU_003601_3_3_11"/>
<dbReference type="UniPathway" id="UPA00193"/>
<dbReference type="Proteomes" id="UP000002198">
    <property type="component" value="Chromosome"/>
</dbReference>
<dbReference type="GO" id="GO:0005524">
    <property type="term" value="F:ATP binding"/>
    <property type="evidence" value="ECO:0007669"/>
    <property type="project" value="UniProtKB-UniRule"/>
</dbReference>
<dbReference type="GO" id="GO:0004329">
    <property type="term" value="F:formate-tetrahydrofolate ligase activity"/>
    <property type="evidence" value="ECO:0007669"/>
    <property type="project" value="UniProtKB-UniRule"/>
</dbReference>
<dbReference type="GO" id="GO:0035999">
    <property type="term" value="P:tetrahydrofolate interconversion"/>
    <property type="evidence" value="ECO:0007669"/>
    <property type="project" value="UniProtKB-UniRule"/>
</dbReference>
<dbReference type="CDD" id="cd00477">
    <property type="entry name" value="FTHFS"/>
    <property type="match status" value="1"/>
</dbReference>
<dbReference type="FunFam" id="3.30.1510.10:FF:000001">
    <property type="entry name" value="Formate--tetrahydrofolate ligase"/>
    <property type="match status" value="1"/>
</dbReference>
<dbReference type="FunFam" id="3.10.410.10:FF:000001">
    <property type="entry name" value="Putative formate--tetrahydrofolate ligase"/>
    <property type="match status" value="1"/>
</dbReference>
<dbReference type="Gene3D" id="3.30.1510.10">
    <property type="entry name" value="Domain 2, N(10)-formyltetrahydrofolate synthetase"/>
    <property type="match status" value="1"/>
</dbReference>
<dbReference type="Gene3D" id="3.10.410.10">
    <property type="entry name" value="Formyltetrahydrofolate synthetase, domain 3"/>
    <property type="match status" value="1"/>
</dbReference>
<dbReference type="Gene3D" id="3.40.50.300">
    <property type="entry name" value="P-loop containing nucleotide triphosphate hydrolases"/>
    <property type="match status" value="1"/>
</dbReference>
<dbReference type="HAMAP" id="MF_01543">
    <property type="entry name" value="FTHFS"/>
    <property type="match status" value="1"/>
</dbReference>
<dbReference type="InterPro" id="IPR000559">
    <property type="entry name" value="Formate_THF_ligase"/>
</dbReference>
<dbReference type="InterPro" id="IPR020628">
    <property type="entry name" value="Formate_THF_ligase_CS"/>
</dbReference>
<dbReference type="InterPro" id="IPR027417">
    <property type="entry name" value="P-loop_NTPase"/>
</dbReference>
<dbReference type="NCBIfam" id="NF010030">
    <property type="entry name" value="PRK13505.1"/>
    <property type="match status" value="1"/>
</dbReference>
<dbReference type="Pfam" id="PF01268">
    <property type="entry name" value="FTHFS"/>
    <property type="match status" value="1"/>
</dbReference>
<dbReference type="SUPFAM" id="SSF52540">
    <property type="entry name" value="P-loop containing nucleoside triphosphate hydrolases"/>
    <property type="match status" value="1"/>
</dbReference>
<dbReference type="PROSITE" id="PS00721">
    <property type="entry name" value="FTHFS_1"/>
    <property type="match status" value="1"/>
</dbReference>
<dbReference type="PROSITE" id="PS00722">
    <property type="entry name" value="FTHFS_2"/>
    <property type="match status" value="1"/>
</dbReference>
<sequence length="550" mass="58098">MPTDVEIAQAHTLEPITDIANRAGVPSDALIPYGFTKAKIDINRIASENTGKLVLVTGISPTPAGEGKSTVLIGLSDAMRLRGHNSIVAIREPSLGPVMGIKGGAAGGGYSQIVPMEDINLHFTGDFHAITAANNTLAAMIDNHIHQGNTLGIDVRRITWQRCLDVNDRCLRKVVTGLGGKAHGVPTETGFTITAASEIMAILCLALDLTDLEARLARIVVGQTFSSEPVTVGQLNAQGALAALLRDAVNPNLVQTLGGTPALCHGGPFANIAHGCNSLIATKTALSLGDVVLTEAGFGSDLGAEKFFDIKSRVGDLNVAATVVVATVRSLKYNAGVPKDELTTENLEALASGVVNLERHVENIRAFGIEPIVALNKFASDTDAEINQLKAWAETMSVQLIPVEVWAHGGQGALELADAVAVSMQNQTSHHLYDPELGIEASLLTIAQKIYGAADVELSKQARQDLAYLQENGWDRLPVCISKTQYSFSDDPSQLGRPEGHTLHVRNLLPRIGAGFIVALTGDVMTMPGLPKKPAAENIGVENGEIKGLF</sequence>
<organism>
    <name type="scientific">Corynebacterium diphtheriae (strain ATCC 700971 / NCTC 13129 / Biotype gravis)</name>
    <dbReference type="NCBI Taxonomy" id="257309"/>
    <lineage>
        <taxon>Bacteria</taxon>
        <taxon>Bacillati</taxon>
        <taxon>Actinomycetota</taxon>
        <taxon>Actinomycetes</taxon>
        <taxon>Mycobacteriales</taxon>
        <taxon>Corynebacteriaceae</taxon>
        <taxon>Corynebacterium</taxon>
    </lineage>
</organism>
<feature type="chain" id="PRO_0000199342" description="Formate--tetrahydrofolate ligase">
    <location>
        <begin position="1"/>
        <end position="550"/>
    </location>
</feature>
<feature type="binding site" evidence="1">
    <location>
        <begin position="62"/>
        <end position="69"/>
    </location>
    <ligand>
        <name>ATP</name>
        <dbReference type="ChEBI" id="CHEBI:30616"/>
    </ligand>
</feature>
<evidence type="ECO:0000255" key="1">
    <source>
        <dbReference type="HAMAP-Rule" id="MF_01543"/>
    </source>
</evidence>
<accession>Q6NH87</accession>
<protein>
    <recommendedName>
        <fullName evidence="1">Formate--tetrahydrofolate ligase</fullName>
        <ecNumber evidence="1">6.3.4.3</ecNumber>
    </recommendedName>
    <alternativeName>
        <fullName evidence="1">Formyltetrahydrofolate synthetase</fullName>
        <shortName evidence="1">FHS</shortName>
        <shortName evidence="1">FTHFS</shortName>
    </alternativeName>
</protein>
<keyword id="KW-0067">ATP-binding</keyword>
<keyword id="KW-0436">Ligase</keyword>
<keyword id="KW-0547">Nucleotide-binding</keyword>
<keyword id="KW-0554">One-carbon metabolism</keyword>
<keyword id="KW-1185">Reference proteome</keyword>
<name>FTHS_CORDI</name>
<gene>
    <name evidence="1" type="primary">fhs</name>
    <name type="ordered locus">DIP1253</name>
</gene>
<proteinExistence type="inferred from homology"/>
<comment type="catalytic activity">
    <reaction evidence="1">
        <text>(6S)-5,6,7,8-tetrahydrofolate + formate + ATP = (6R)-10-formyltetrahydrofolate + ADP + phosphate</text>
        <dbReference type="Rhea" id="RHEA:20221"/>
        <dbReference type="ChEBI" id="CHEBI:15740"/>
        <dbReference type="ChEBI" id="CHEBI:30616"/>
        <dbReference type="ChEBI" id="CHEBI:43474"/>
        <dbReference type="ChEBI" id="CHEBI:57453"/>
        <dbReference type="ChEBI" id="CHEBI:195366"/>
        <dbReference type="ChEBI" id="CHEBI:456216"/>
        <dbReference type="EC" id="6.3.4.3"/>
    </reaction>
</comment>
<comment type="pathway">
    <text evidence="1">One-carbon metabolism; tetrahydrofolate interconversion.</text>
</comment>
<comment type="similarity">
    <text evidence="1">Belongs to the formate--tetrahydrofolate ligase family.</text>
</comment>
<reference key="1">
    <citation type="journal article" date="2003" name="Nucleic Acids Res.">
        <title>The complete genome sequence and analysis of Corynebacterium diphtheriae NCTC13129.</title>
        <authorList>
            <person name="Cerdeno-Tarraga A.-M."/>
            <person name="Efstratiou A."/>
            <person name="Dover L.G."/>
            <person name="Holden M.T.G."/>
            <person name="Pallen M.J."/>
            <person name="Bentley S.D."/>
            <person name="Besra G.S."/>
            <person name="Churcher C.M."/>
            <person name="James K.D."/>
            <person name="De Zoysa A."/>
            <person name="Chillingworth T."/>
            <person name="Cronin A."/>
            <person name="Dowd L."/>
            <person name="Feltwell T."/>
            <person name="Hamlin N."/>
            <person name="Holroyd S."/>
            <person name="Jagels K."/>
            <person name="Moule S."/>
            <person name="Quail M.A."/>
            <person name="Rabbinowitsch E."/>
            <person name="Rutherford K.M."/>
            <person name="Thomson N.R."/>
            <person name="Unwin L."/>
            <person name="Whitehead S."/>
            <person name="Barrell B.G."/>
            <person name="Parkhill J."/>
        </authorList>
    </citation>
    <scope>NUCLEOTIDE SEQUENCE [LARGE SCALE GENOMIC DNA]</scope>
    <source>
        <strain>ATCC 700971 / NCTC 13129 / Biotype gravis</strain>
    </source>
</reference>